<proteinExistence type="predicted"/>
<keyword id="KW-0472">Membrane</keyword>
<keyword id="KW-1185">Reference proteome</keyword>
<keyword id="KW-0812">Transmembrane</keyword>
<keyword id="KW-1133">Transmembrane helix</keyword>
<sequence>MVQLRRTITTNKVFQAITSTNDKVAHFVVFMWESWLFVKMFAEDIVTFRKLQANKYVLGVLICSLCASVTSEFAQSVVSRGQRVFDVKDIICNFWGSLLGVGIAFYQDR</sequence>
<organism>
    <name type="scientific">Saccharomyces cerevisiae (strain ATCC 204508 / S288c)</name>
    <name type="common">Baker's yeast</name>
    <dbReference type="NCBI Taxonomy" id="559292"/>
    <lineage>
        <taxon>Eukaryota</taxon>
        <taxon>Fungi</taxon>
        <taxon>Dikarya</taxon>
        <taxon>Ascomycota</taxon>
        <taxon>Saccharomycotina</taxon>
        <taxon>Saccharomycetes</taxon>
        <taxon>Saccharomycetales</taxon>
        <taxon>Saccharomycetaceae</taxon>
        <taxon>Saccharomyces</taxon>
    </lineage>
</organism>
<gene>
    <name type="ordered locus">YJR112W-A</name>
</gene>
<protein>
    <recommendedName>
        <fullName>Uncharacterized protein YJR112W-A</fullName>
    </recommendedName>
</protein>
<comment type="subcellular location">
    <subcellularLocation>
        <location evidence="2">Membrane</location>
        <topology evidence="2">Single-pass membrane protein</topology>
    </subcellularLocation>
</comment>
<evidence type="ECO:0000255" key="1"/>
<evidence type="ECO:0000305" key="2"/>
<reference key="1">
    <citation type="journal article" date="1996" name="EMBO J.">
        <title>Complete nucleotide sequence of Saccharomyces cerevisiae chromosome X.</title>
        <authorList>
            <person name="Galibert F."/>
            <person name="Alexandraki D."/>
            <person name="Baur A."/>
            <person name="Boles E."/>
            <person name="Chalwatzis N."/>
            <person name="Chuat J.-C."/>
            <person name="Coster F."/>
            <person name="Cziepluch C."/>
            <person name="de Haan M."/>
            <person name="Domdey H."/>
            <person name="Durand P."/>
            <person name="Entian K.-D."/>
            <person name="Gatius M."/>
            <person name="Goffeau A."/>
            <person name="Grivell L.A."/>
            <person name="Hennemann A."/>
            <person name="Herbert C.J."/>
            <person name="Heumann K."/>
            <person name="Hilger F."/>
            <person name="Hollenberg C.P."/>
            <person name="Huang M.-E."/>
            <person name="Jacq C."/>
            <person name="Jauniaux J.-C."/>
            <person name="Katsoulou C."/>
            <person name="Kirchrath L."/>
            <person name="Kleine K."/>
            <person name="Kordes E."/>
            <person name="Koetter P."/>
            <person name="Liebl S."/>
            <person name="Louis E.J."/>
            <person name="Manus V."/>
            <person name="Mewes H.-W."/>
            <person name="Miosga T."/>
            <person name="Obermaier B."/>
            <person name="Perea J."/>
            <person name="Pohl T.M."/>
            <person name="Portetelle D."/>
            <person name="Pujol A."/>
            <person name="Purnelle B."/>
            <person name="Ramezani Rad M."/>
            <person name="Rasmussen S.W."/>
            <person name="Rose M."/>
            <person name="Rossau R."/>
            <person name="Schaaff-Gerstenschlaeger I."/>
            <person name="Smits P.H.M."/>
            <person name="Scarcez T."/>
            <person name="Soriano N."/>
            <person name="To Van D."/>
            <person name="Tzermia M."/>
            <person name="Van Broekhoven A."/>
            <person name="Vandenbol M."/>
            <person name="Wedler H."/>
            <person name="von Wettstein D."/>
            <person name="Wambutt R."/>
            <person name="Zagulski M."/>
            <person name="Zollner A."/>
            <person name="Karpfinger-Hartl L."/>
        </authorList>
    </citation>
    <scope>NUCLEOTIDE SEQUENCE [LARGE SCALE GENOMIC DNA]</scope>
    <source>
        <strain>ATCC 204508 / S288c</strain>
    </source>
</reference>
<reference key="2">
    <citation type="journal article" date="2014" name="G3 (Bethesda)">
        <title>The reference genome sequence of Saccharomyces cerevisiae: Then and now.</title>
        <authorList>
            <person name="Engel S.R."/>
            <person name="Dietrich F.S."/>
            <person name="Fisk D.G."/>
            <person name="Binkley G."/>
            <person name="Balakrishnan R."/>
            <person name="Costanzo M.C."/>
            <person name="Dwight S.S."/>
            <person name="Hitz B.C."/>
            <person name="Karra K."/>
            <person name="Nash R.S."/>
            <person name="Weng S."/>
            <person name="Wong E.D."/>
            <person name="Lloyd P."/>
            <person name="Skrzypek M.S."/>
            <person name="Miyasato S.R."/>
            <person name="Simison M."/>
            <person name="Cherry J.M."/>
        </authorList>
    </citation>
    <scope>GENOME REANNOTATION</scope>
    <source>
        <strain>ATCC 204508 / S288c</strain>
    </source>
</reference>
<reference key="3">
    <citation type="journal article" date="2003" name="Genome Biol.">
        <title>Reinvestigation of the Saccharomyces cerevisiae genome annotation by comparison to the genome of a related fungus: Ashbya gossypii.</title>
        <authorList>
            <person name="Brachat S."/>
            <person name="Dietrich F.S."/>
            <person name="Voegeli S."/>
            <person name="Zhang Z."/>
            <person name="Stuart L."/>
            <person name="Lerch A."/>
            <person name="Gates K."/>
            <person name="Gaffney T.D."/>
            <person name="Philippsen P."/>
        </authorList>
    </citation>
    <scope>GENOME REANNOTATION</scope>
</reference>
<name>YJ112_YEAST</name>
<accession>Q3E743</accession>
<accession>D6VWT2</accession>
<dbReference type="EMBL" id="Z49612">
    <property type="status" value="NOT_ANNOTATED_CDS"/>
    <property type="molecule type" value="Genomic_DNA"/>
</dbReference>
<dbReference type="EMBL" id="BK006943">
    <property type="protein sequence ID" value="DAA08898.1"/>
    <property type="molecule type" value="Genomic_DNA"/>
</dbReference>
<dbReference type="RefSeq" id="NP_878107.1">
    <property type="nucleotide sequence ID" value="NM_001184523.1"/>
</dbReference>
<dbReference type="BioGRID" id="37012">
    <property type="interactions" value="3"/>
</dbReference>
<dbReference type="FunCoup" id="Q3E743">
    <property type="interactions" value="3"/>
</dbReference>
<dbReference type="STRING" id="4932.YJR112W-A"/>
<dbReference type="PaxDb" id="4932-YJR112W-A"/>
<dbReference type="PeptideAtlas" id="Q3E743"/>
<dbReference type="EnsemblFungi" id="YJR112W-A_mRNA">
    <property type="protein sequence ID" value="YJR112W-A"/>
    <property type="gene ID" value="YJR112W-A"/>
</dbReference>
<dbReference type="GeneID" id="1466470"/>
<dbReference type="KEGG" id="sce:YJR112W-A"/>
<dbReference type="AGR" id="SGD:S000028513"/>
<dbReference type="SGD" id="S000028513">
    <property type="gene designation" value="YJR112W-A"/>
</dbReference>
<dbReference type="VEuPathDB" id="FungiDB:YJR112W-A"/>
<dbReference type="eggNOG" id="ENOG502S8TE">
    <property type="taxonomic scope" value="Eukaryota"/>
</dbReference>
<dbReference type="HOGENOM" id="CLU_144922_1_0_1"/>
<dbReference type="InParanoid" id="Q3E743"/>
<dbReference type="OMA" id="ICTMFAS"/>
<dbReference type="OrthoDB" id="63581at2759"/>
<dbReference type="BioCyc" id="YEAST:G3O-31803-MONOMER"/>
<dbReference type="BioGRID-ORCS" id="1466470">
    <property type="hits" value="9 hits in 10 CRISPR screens"/>
</dbReference>
<dbReference type="PRO" id="PR:Q3E743"/>
<dbReference type="Proteomes" id="UP000002311">
    <property type="component" value="Chromosome X"/>
</dbReference>
<dbReference type="RNAct" id="Q3E743">
    <property type="molecule type" value="protein"/>
</dbReference>
<dbReference type="GO" id="GO:0005783">
    <property type="term" value="C:endoplasmic reticulum"/>
    <property type="evidence" value="ECO:0007005"/>
    <property type="project" value="SGD"/>
</dbReference>
<dbReference type="GO" id="GO:0016020">
    <property type="term" value="C:membrane"/>
    <property type="evidence" value="ECO:0007669"/>
    <property type="project" value="UniProtKB-SubCell"/>
</dbReference>
<dbReference type="InterPro" id="IPR006976">
    <property type="entry name" value="VanZ-like"/>
</dbReference>
<dbReference type="NCBIfam" id="NF037970">
    <property type="entry name" value="vanZ_1"/>
    <property type="match status" value="1"/>
</dbReference>
<dbReference type="PANTHER" id="PTHR28008">
    <property type="entry name" value="DOMAIN PROTEIN, PUTATIVE (AFU_ORTHOLOGUE AFUA_3G10980)-RELATED"/>
    <property type="match status" value="1"/>
</dbReference>
<dbReference type="PANTHER" id="PTHR28008:SF1">
    <property type="entry name" value="DOMAIN PROTEIN, PUTATIVE (AFU_ORTHOLOGUE AFUA_3G10980)-RELATED"/>
    <property type="match status" value="1"/>
</dbReference>
<dbReference type="Pfam" id="PF04892">
    <property type="entry name" value="VanZ"/>
    <property type="match status" value="1"/>
</dbReference>
<feature type="chain" id="PRO_0000245416" description="Uncharacterized protein YJR112W-A">
    <location>
        <begin position="1"/>
        <end position="109"/>
    </location>
</feature>
<feature type="transmembrane region" description="Helical" evidence="1">
    <location>
        <begin position="90"/>
        <end position="107"/>
    </location>
</feature>